<sequence>MTVTTSSPTTAEGRTPGIGRVARVIGPVVDVEFAPDELPEIYTALHVDRTIDGETAVLTLEVAQHIGDNTIRAISMQQTDGLVRGAPVRDTGAPISVPVGNATKGHVFNVLGNPLDVDKVDAETYWPIHRSAPAFDQLESKTEMFTTGIKVIDLLAPYVRGGKIGLMGGAGVGKTVIIQEMIRRVAKEFGGVSVFAGVGERTREGNDLFLEMTEAGVIEDTALVFGQMDEPPGTRLRVALGALTMAEYFRDVQKQDVLLFIDNIFRFTQAGSEVSTLLGRMPSAVGYQPTLADEMGALQERITSTRGHSITSLQAIYVPADDLTDPAPATTFTHLDANTVLDRAISDLGIYPAVSPLDSNSRILDARYIGQEHYDTAREVQRILQRYKDLQDIIAILGIDELSEEDKILVNRARRIQRFLSQPFFVAEQFTGIPGKFVPLDETIDSFRRLTQGDYDHLPEQAFFMCGGIEDAEKNAENL</sequence>
<proteinExistence type="inferred from homology"/>
<organism>
    <name type="scientific">Parafrankia sp. (strain EAN1pec)</name>
    <dbReference type="NCBI Taxonomy" id="298653"/>
    <lineage>
        <taxon>Bacteria</taxon>
        <taxon>Bacillati</taxon>
        <taxon>Actinomycetota</taxon>
        <taxon>Actinomycetes</taxon>
        <taxon>Frankiales</taxon>
        <taxon>Frankiaceae</taxon>
        <taxon>Parafrankia</taxon>
    </lineage>
</organism>
<name>ATPB_PARS2</name>
<protein>
    <recommendedName>
        <fullName evidence="1">ATP synthase subunit beta</fullName>
        <ecNumber evidence="1">7.1.2.2</ecNumber>
    </recommendedName>
    <alternativeName>
        <fullName evidence="1">ATP synthase F1 sector subunit beta</fullName>
    </alternativeName>
    <alternativeName>
        <fullName evidence="1">F-ATPase subunit beta</fullName>
    </alternativeName>
</protein>
<reference key="1">
    <citation type="journal article" date="2007" name="Genome Res.">
        <title>Genome characteristics of facultatively symbiotic Frankia sp. strains reflect host range and host plant biogeography.</title>
        <authorList>
            <person name="Normand P."/>
            <person name="Lapierre P."/>
            <person name="Tisa L.S."/>
            <person name="Gogarten J.P."/>
            <person name="Alloisio N."/>
            <person name="Bagnarol E."/>
            <person name="Bassi C.A."/>
            <person name="Berry A.M."/>
            <person name="Bickhart D.M."/>
            <person name="Choisne N."/>
            <person name="Couloux A."/>
            <person name="Cournoyer B."/>
            <person name="Cruveiller S."/>
            <person name="Daubin V."/>
            <person name="Demange N."/>
            <person name="Francino M.P."/>
            <person name="Goltsman E."/>
            <person name="Huang Y."/>
            <person name="Kopp O.R."/>
            <person name="Labarre L."/>
            <person name="Lapidus A."/>
            <person name="Lavire C."/>
            <person name="Marechal J."/>
            <person name="Martinez M."/>
            <person name="Mastronunzio J.E."/>
            <person name="Mullin B.C."/>
            <person name="Niemann J."/>
            <person name="Pujic P."/>
            <person name="Rawnsley T."/>
            <person name="Rouy Z."/>
            <person name="Schenowitz C."/>
            <person name="Sellstedt A."/>
            <person name="Tavares F."/>
            <person name="Tomkins J.P."/>
            <person name="Vallenet D."/>
            <person name="Valverde C."/>
            <person name="Wall L.G."/>
            <person name="Wang Y."/>
            <person name="Medigue C."/>
            <person name="Benson D.R."/>
        </authorList>
    </citation>
    <scope>NUCLEOTIDE SEQUENCE [LARGE SCALE GENOMIC DNA]</scope>
    <source>
        <strain>EAN1pec</strain>
    </source>
</reference>
<keyword id="KW-0066">ATP synthesis</keyword>
<keyword id="KW-0067">ATP-binding</keyword>
<keyword id="KW-1003">Cell membrane</keyword>
<keyword id="KW-0139">CF(1)</keyword>
<keyword id="KW-0375">Hydrogen ion transport</keyword>
<keyword id="KW-0406">Ion transport</keyword>
<keyword id="KW-0472">Membrane</keyword>
<keyword id="KW-0547">Nucleotide-binding</keyword>
<keyword id="KW-1278">Translocase</keyword>
<keyword id="KW-0813">Transport</keyword>
<feature type="chain" id="PRO_1000143509" description="ATP synthase subunit beta">
    <location>
        <begin position="1"/>
        <end position="479"/>
    </location>
</feature>
<feature type="binding site" evidence="1">
    <location>
        <begin position="168"/>
        <end position="175"/>
    </location>
    <ligand>
        <name>ATP</name>
        <dbReference type="ChEBI" id="CHEBI:30616"/>
    </ligand>
</feature>
<gene>
    <name evidence="1" type="primary">atpD</name>
    <name type="ordered locus">Franean1_1024</name>
</gene>
<dbReference type="EC" id="7.1.2.2" evidence="1"/>
<dbReference type="EMBL" id="CP000820">
    <property type="protein sequence ID" value="ABW10480.1"/>
    <property type="molecule type" value="Genomic_DNA"/>
</dbReference>
<dbReference type="RefSeq" id="WP_020458662.1">
    <property type="nucleotide sequence ID" value="NC_009921.1"/>
</dbReference>
<dbReference type="SMR" id="A8L3W5"/>
<dbReference type="STRING" id="298653.Franean1_1024"/>
<dbReference type="KEGG" id="fre:Franean1_1024"/>
<dbReference type="eggNOG" id="COG0055">
    <property type="taxonomic scope" value="Bacteria"/>
</dbReference>
<dbReference type="HOGENOM" id="CLU_022398_0_2_11"/>
<dbReference type="GO" id="GO:0005886">
    <property type="term" value="C:plasma membrane"/>
    <property type="evidence" value="ECO:0007669"/>
    <property type="project" value="UniProtKB-SubCell"/>
</dbReference>
<dbReference type="GO" id="GO:0045259">
    <property type="term" value="C:proton-transporting ATP synthase complex"/>
    <property type="evidence" value="ECO:0007669"/>
    <property type="project" value="UniProtKB-KW"/>
</dbReference>
<dbReference type="GO" id="GO:0005524">
    <property type="term" value="F:ATP binding"/>
    <property type="evidence" value="ECO:0007669"/>
    <property type="project" value="UniProtKB-UniRule"/>
</dbReference>
<dbReference type="GO" id="GO:0016887">
    <property type="term" value="F:ATP hydrolysis activity"/>
    <property type="evidence" value="ECO:0007669"/>
    <property type="project" value="InterPro"/>
</dbReference>
<dbReference type="GO" id="GO:0046933">
    <property type="term" value="F:proton-transporting ATP synthase activity, rotational mechanism"/>
    <property type="evidence" value="ECO:0007669"/>
    <property type="project" value="UniProtKB-UniRule"/>
</dbReference>
<dbReference type="CDD" id="cd18110">
    <property type="entry name" value="ATP-synt_F1_beta_C"/>
    <property type="match status" value="1"/>
</dbReference>
<dbReference type="CDD" id="cd18115">
    <property type="entry name" value="ATP-synt_F1_beta_N"/>
    <property type="match status" value="1"/>
</dbReference>
<dbReference type="CDD" id="cd01133">
    <property type="entry name" value="F1-ATPase_beta_CD"/>
    <property type="match status" value="1"/>
</dbReference>
<dbReference type="FunFam" id="1.10.1140.10:FF:000001">
    <property type="entry name" value="ATP synthase subunit beta"/>
    <property type="match status" value="1"/>
</dbReference>
<dbReference type="FunFam" id="2.40.10.170:FF:000005">
    <property type="entry name" value="ATP synthase subunit beta"/>
    <property type="match status" value="1"/>
</dbReference>
<dbReference type="FunFam" id="3.40.50.300:FF:000004">
    <property type="entry name" value="ATP synthase subunit beta"/>
    <property type="match status" value="1"/>
</dbReference>
<dbReference type="Gene3D" id="2.40.10.170">
    <property type="match status" value="1"/>
</dbReference>
<dbReference type="Gene3D" id="1.10.1140.10">
    <property type="entry name" value="Bovine Mitochondrial F1-atpase, Atp Synthase Beta Chain, Chain D, domain 3"/>
    <property type="match status" value="1"/>
</dbReference>
<dbReference type="Gene3D" id="3.40.50.300">
    <property type="entry name" value="P-loop containing nucleotide triphosphate hydrolases"/>
    <property type="match status" value="1"/>
</dbReference>
<dbReference type="HAMAP" id="MF_01347">
    <property type="entry name" value="ATP_synth_beta_bact"/>
    <property type="match status" value="1"/>
</dbReference>
<dbReference type="InterPro" id="IPR003593">
    <property type="entry name" value="AAA+_ATPase"/>
</dbReference>
<dbReference type="InterPro" id="IPR055190">
    <property type="entry name" value="ATP-synt_VA_C"/>
</dbReference>
<dbReference type="InterPro" id="IPR005722">
    <property type="entry name" value="ATP_synth_F1_bsu"/>
</dbReference>
<dbReference type="InterPro" id="IPR050053">
    <property type="entry name" value="ATPase_alpha/beta_chains"/>
</dbReference>
<dbReference type="InterPro" id="IPR004100">
    <property type="entry name" value="ATPase_F1/V1/A1_a/bsu_N"/>
</dbReference>
<dbReference type="InterPro" id="IPR036121">
    <property type="entry name" value="ATPase_F1/V1/A1_a/bsu_N_sf"/>
</dbReference>
<dbReference type="InterPro" id="IPR000194">
    <property type="entry name" value="ATPase_F1/V1/A1_a/bsu_nucl-bd"/>
</dbReference>
<dbReference type="InterPro" id="IPR024034">
    <property type="entry name" value="ATPase_F1/V1_b/a_C"/>
</dbReference>
<dbReference type="InterPro" id="IPR027417">
    <property type="entry name" value="P-loop_NTPase"/>
</dbReference>
<dbReference type="NCBIfam" id="TIGR01039">
    <property type="entry name" value="atpD"/>
    <property type="match status" value="1"/>
</dbReference>
<dbReference type="PANTHER" id="PTHR15184">
    <property type="entry name" value="ATP SYNTHASE"/>
    <property type="match status" value="1"/>
</dbReference>
<dbReference type="PANTHER" id="PTHR15184:SF71">
    <property type="entry name" value="ATP SYNTHASE SUBUNIT BETA, MITOCHONDRIAL"/>
    <property type="match status" value="1"/>
</dbReference>
<dbReference type="Pfam" id="PF00006">
    <property type="entry name" value="ATP-synt_ab"/>
    <property type="match status" value="1"/>
</dbReference>
<dbReference type="Pfam" id="PF02874">
    <property type="entry name" value="ATP-synt_ab_N"/>
    <property type="match status" value="1"/>
</dbReference>
<dbReference type="Pfam" id="PF22919">
    <property type="entry name" value="ATP-synt_VA_C"/>
    <property type="match status" value="1"/>
</dbReference>
<dbReference type="SMART" id="SM00382">
    <property type="entry name" value="AAA"/>
    <property type="match status" value="1"/>
</dbReference>
<dbReference type="SUPFAM" id="SSF47917">
    <property type="entry name" value="C-terminal domain of alpha and beta subunits of F1 ATP synthase"/>
    <property type="match status" value="1"/>
</dbReference>
<dbReference type="SUPFAM" id="SSF50615">
    <property type="entry name" value="N-terminal domain of alpha and beta subunits of F1 ATP synthase"/>
    <property type="match status" value="1"/>
</dbReference>
<dbReference type="SUPFAM" id="SSF52540">
    <property type="entry name" value="P-loop containing nucleoside triphosphate hydrolases"/>
    <property type="match status" value="1"/>
</dbReference>
<evidence type="ECO:0000255" key="1">
    <source>
        <dbReference type="HAMAP-Rule" id="MF_01347"/>
    </source>
</evidence>
<comment type="function">
    <text evidence="1">Produces ATP from ADP in the presence of a proton gradient across the membrane. The catalytic sites are hosted primarily by the beta subunits.</text>
</comment>
<comment type="catalytic activity">
    <reaction evidence="1">
        <text>ATP + H2O + 4 H(+)(in) = ADP + phosphate + 5 H(+)(out)</text>
        <dbReference type="Rhea" id="RHEA:57720"/>
        <dbReference type="ChEBI" id="CHEBI:15377"/>
        <dbReference type="ChEBI" id="CHEBI:15378"/>
        <dbReference type="ChEBI" id="CHEBI:30616"/>
        <dbReference type="ChEBI" id="CHEBI:43474"/>
        <dbReference type="ChEBI" id="CHEBI:456216"/>
        <dbReference type="EC" id="7.1.2.2"/>
    </reaction>
</comment>
<comment type="subunit">
    <text evidence="1">F-type ATPases have 2 components, CF(1) - the catalytic core - and CF(0) - the membrane proton channel. CF(1) has five subunits: alpha(3), beta(3), gamma(1), delta(1), epsilon(1). CF(0) has three main subunits: a(1), b(2) and c(9-12). The alpha and beta chains form an alternating ring which encloses part of the gamma chain. CF(1) is attached to CF(0) by a central stalk formed by the gamma and epsilon chains, while a peripheral stalk is formed by the delta and b chains.</text>
</comment>
<comment type="subcellular location">
    <subcellularLocation>
        <location evidence="1">Cell membrane</location>
        <topology evidence="1">Peripheral membrane protein</topology>
    </subcellularLocation>
</comment>
<comment type="similarity">
    <text evidence="1">Belongs to the ATPase alpha/beta chains family.</text>
</comment>
<accession>A8L3W5</accession>